<evidence type="ECO:0000250" key="1">
    <source>
        <dbReference type="UniProtKB" id="Q1XH05"/>
    </source>
</evidence>
<evidence type="ECO:0000250" key="2">
    <source>
        <dbReference type="UniProtKB" id="Q75I94"/>
    </source>
</evidence>
<evidence type="ECO:0000250" key="3">
    <source>
        <dbReference type="UniProtKB" id="Q7XSK0"/>
    </source>
</evidence>
<evidence type="ECO:0000250" key="4">
    <source>
        <dbReference type="UniProtKB" id="Q9SPP9"/>
    </source>
</evidence>
<evidence type="ECO:0000255" key="5"/>
<evidence type="ECO:0000255" key="6">
    <source>
        <dbReference type="PROSITE-ProRule" id="PRU00498"/>
    </source>
</evidence>
<evidence type="ECO:0000305" key="7"/>
<dbReference type="EC" id="3.2.1.21" evidence="2"/>
<dbReference type="EMBL" id="AL731582">
    <property type="protein sequence ID" value="CAE05481.2"/>
    <property type="molecule type" value="Genomic_DNA"/>
</dbReference>
<dbReference type="EMBL" id="AP008210">
    <property type="protein sequence ID" value="BAF14981.1"/>
    <property type="status" value="ALT_SEQ"/>
    <property type="molecule type" value="Genomic_DNA"/>
</dbReference>
<dbReference type="EMBL" id="AP014960">
    <property type="status" value="NOT_ANNOTATED_CDS"/>
    <property type="molecule type" value="Genomic_DNA"/>
</dbReference>
<dbReference type="EMBL" id="CM000142">
    <property type="protein sequence ID" value="EEE62264.1"/>
    <property type="molecule type" value="Genomic_DNA"/>
</dbReference>
<dbReference type="EMBL" id="AK065793">
    <property type="status" value="NOT_ANNOTATED_CDS"/>
    <property type="molecule type" value="mRNA"/>
</dbReference>
<dbReference type="RefSeq" id="XP_015636540.1">
    <property type="nucleotide sequence ID" value="XM_015781054.1"/>
</dbReference>
<dbReference type="SMR" id="Q7F9K4"/>
<dbReference type="FunCoup" id="Q7F9K4">
    <property type="interactions" value="567"/>
</dbReference>
<dbReference type="STRING" id="39947.Q7F9K4"/>
<dbReference type="CAZy" id="GH1">
    <property type="family name" value="Glycoside Hydrolase Family 1"/>
</dbReference>
<dbReference type="GlyCosmos" id="Q7F9K4">
    <property type="glycosylation" value="3 sites, No reported glycans"/>
</dbReference>
<dbReference type="PaxDb" id="39947-Q7F9K4"/>
<dbReference type="EnsemblPlants" id="Os04t0474500-01">
    <property type="protein sequence ID" value="Os04t0474500-01"/>
    <property type="gene ID" value="Os04g0474500"/>
</dbReference>
<dbReference type="Gramene" id="Os04t0474500-01">
    <property type="protein sequence ID" value="Os04t0474500-01"/>
    <property type="gene ID" value="Os04g0474500"/>
</dbReference>
<dbReference type="KEGG" id="dosa:Os04g0474500"/>
<dbReference type="eggNOG" id="KOG0626">
    <property type="taxonomic scope" value="Eukaryota"/>
</dbReference>
<dbReference type="InParanoid" id="Q7F9K4"/>
<dbReference type="OrthoDB" id="65569at2759"/>
<dbReference type="Proteomes" id="UP000000763">
    <property type="component" value="Chromosome 4"/>
</dbReference>
<dbReference type="Proteomes" id="UP000007752">
    <property type="component" value="Chromosome 5"/>
</dbReference>
<dbReference type="Proteomes" id="UP000059680">
    <property type="component" value="Chromosome 4"/>
</dbReference>
<dbReference type="GO" id="GO:0033907">
    <property type="term" value="F:beta-D-fucosidase activity"/>
    <property type="evidence" value="ECO:0007669"/>
    <property type="project" value="UniProtKB-ARBA"/>
</dbReference>
<dbReference type="GO" id="GO:0004565">
    <property type="term" value="F:beta-galactosidase activity"/>
    <property type="evidence" value="ECO:0007669"/>
    <property type="project" value="UniProtKB-ARBA"/>
</dbReference>
<dbReference type="GO" id="GO:0008422">
    <property type="term" value="F:beta-glucosidase activity"/>
    <property type="evidence" value="ECO:0000318"/>
    <property type="project" value="GO_Central"/>
</dbReference>
<dbReference type="GO" id="GO:0005975">
    <property type="term" value="P:carbohydrate metabolic process"/>
    <property type="evidence" value="ECO:0007669"/>
    <property type="project" value="InterPro"/>
</dbReference>
<dbReference type="FunFam" id="3.20.20.80:FF:000020">
    <property type="entry name" value="Beta-glucosidase 12"/>
    <property type="match status" value="1"/>
</dbReference>
<dbReference type="Gene3D" id="3.20.20.80">
    <property type="entry name" value="Glycosidases"/>
    <property type="match status" value="1"/>
</dbReference>
<dbReference type="InterPro" id="IPR001360">
    <property type="entry name" value="Glyco_hydro_1"/>
</dbReference>
<dbReference type="InterPro" id="IPR033132">
    <property type="entry name" value="Glyco_hydro_1_N_CS"/>
</dbReference>
<dbReference type="InterPro" id="IPR017853">
    <property type="entry name" value="Glycoside_hydrolase_SF"/>
</dbReference>
<dbReference type="PANTHER" id="PTHR10353:SF154">
    <property type="entry name" value="BETA-GLUCOSIDASE 9-RELATED"/>
    <property type="match status" value="1"/>
</dbReference>
<dbReference type="PANTHER" id="PTHR10353">
    <property type="entry name" value="GLYCOSYL HYDROLASE"/>
    <property type="match status" value="1"/>
</dbReference>
<dbReference type="Pfam" id="PF00232">
    <property type="entry name" value="Glyco_hydro_1"/>
    <property type="match status" value="1"/>
</dbReference>
<dbReference type="PRINTS" id="PR00131">
    <property type="entry name" value="GLHYDRLASE1"/>
</dbReference>
<dbReference type="SUPFAM" id="SSF51445">
    <property type="entry name" value="(Trans)glycosidases"/>
    <property type="match status" value="1"/>
</dbReference>
<dbReference type="PROSITE" id="PS00653">
    <property type="entry name" value="GLYCOSYL_HYDROL_F1_2"/>
    <property type="match status" value="1"/>
</dbReference>
<gene>
    <name type="primary">BGLU10</name>
    <name type="ordered locus">Os04g0474500</name>
    <name type="ordered locus">LOC_Os04g39840</name>
    <name type="ORF">OsJ_17051</name>
    <name type="ORF">OSJNBa0022H21.1</name>
</gene>
<name>BGL10_ORYSJ</name>
<organism>
    <name type="scientific">Oryza sativa subsp. japonica</name>
    <name type="common">Rice</name>
    <dbReference type="NCBI Taxonomy" id="39947"/>
    <lineage>
        <taxon>Eukaryota</taxon>
        <taxon>Viridiplantae</taxon>
        <taxon>Streptophyta</taxon>
        <taxon>Embryophyta</taxon>
        <taxon>Tracheophyta</taxon>
        <taxon>Spermatophyta</taxon>
        <taxon>Magnoliopsida</taxon>
        <taxon>Liliopsida</taxon>
        <taxon>Poales</taxon>
        <taxon>Poaceae</taxon>
        <taxon>BOP clade</taxon>
        <taxon>Oryzoideae</taxon>
        <taxon>Oryzeae</taxon>
        <taxon>Oryzinae</taxon>
        <taxon>Oryza</taxon>
        <taxon>Oryza sativa</taxon>
    </lineage>
</organism>
<feature type="signal peptide" evidence="5">
    <location>
        <begin position="1"/>
        <end position="23"/>
    </location>
</feature>
<feature type="chain" id="PRO_0000390327" description="Beta-glucosidase 10">
    <location>
        <begin position="24"/>
        <end position="533"/>
    </location>
</feature>
<feature type="active site" description="Proton donor" evidence="3">
    <location>
        <position position="203"/>
    </location>
</feature>
<feature type="active site" description="Nucleophile" evidence="3">
    <location>
        <position position="440"/>
    </location>
</feature>
<feature type="binding site" evidence="3">
    <location>
        <position position="53"/>
    </location>
    <ligand>
        <name>a beta-D-glucoside</name>
        <dbReference type="ChEBI" id="CHEBI:22798"/>
    </ligand>
</feature>
<feature type="binding site" evidence="3">
    <location>
        <position position="157"/>
    </location>
    <ligand>
        <name>a beta-D-glucoside</name>
        <dbReference type="ChEBI" id="CHEBI:22798"/>
    </ligand>
</feature>
<feature type="binding site" evidence="3">
    <location>
        <begin position="202"/>
        <end position="203"/>
    </location>
    <ligand>
        <name>a beta-D-glucoside</name>
        <dbReference type="ChEBI" id="CHEBI:22798"/>
    </ligand>
</feature>
<feature type="binding site" evidence="3">
    <location>
        <position position="369"/>
    </location>
    <ligand>
        <name>a beta-D-glucoside</name>
        <dbReference type="ChEBI" id="CHEBI:22798"/>
    </ligand>
</feature>
<feature type="binding site" evidence="4">
    <location>
        <position position="440"/>
    </location>
    <ligand>
        <name>a beta-D-glucoside</name>
        <dbReference type="ChEBI" id="CHEBI:22798"/>
    </ligand>
</feature>
<feature type="binding site" evidence="3">
    <location>
        <position position="489"/>
    </location>
    <ligand>
        <name>a beta-D-glucoside</name>
        <dbReference type="ChEBI" id="CHEBI:22798"/>
    </ligand>
</feature>
<feature type="binding site" evidence="3">
    <location>
        <begin position="496"/>
        <end position="497"/>
    </location>
    <ligand>
        <name>a beta-D-glucoside</name>
        <dbReference type="ChEBI" id="CHEBI:22798"/>
    </ligand>
</feature>
<feature type="binding site" evidence="1">
    <location>
        <position position="505"/>
    </location>
    <ligand>
        <name>a beta-D-glucoside</name>
        <dbReference type="ChEBI" id="CHEBI:22798"/>
    </ligand>
</feature>
<feature type="glycosylation site" description="N-linked (GlcNAc...) asparagine" evidence="6">
    <location>
        <position position="122"/>
    </location>
</feature>
<feature type="glycosylation site" description="N-linked (GlcNAc...) asparagine" evidence="6">
    <location>
        <position position="384"/>
    </location>
</feature>
<feature type="glycosylation site" description="N-linked (GlcNAc...) asparagine" evidence="6">
    <location>
        <position position="448"/>
    </location>
</feature>
<feature type="disulfide bond" evidence="3">
    <location>
        <begin position="222"/>
        <end position="230"/>
    </location>
</feature>
<sequence length="533" mass="60853">MAVAGAMVMSGGVLLLLLAFTCAAYNDAGELPPISRRSFPKGFIFGTSSSSYQFEGAAAKGGRGPSIWDTFTHQYPDKITDKSNGDGACNSYHLYKEDVRIMKEMGMDAYRFSISWSRILPNGSLSGGVNREGINYYNNLINELLSKEVQPFATLFHFDTPQALEDKYKGFLSPNIINDYKDYAEICFKEFGDRVKHWITFNEPWNFCSMGYASGTMAPGRCSSWEKGKCRVGDSGREPYTACHHQLLAHAETVRLYKEKYQFTEEAIRQSPFIRDNNLNRRSAKALQKGRIGIILNSEWFVPFSQSKSSNDAARRVLDFMLGWFMDPLIRGDYPLSMRELVGNRLPEFSKEQSEMVKGAFDFIGLNYYASSYADNDPPSYGHNNSYNTDSHAKITGSRNGIPIGPQAASFWFYIYPEGLRELLLHIKENYGNPTIYITENGVDEINNKTMRLKEALKDDIRIEYYHKHLLALLSAMRDGANVKGYFAWSLLDNFEWSEGYTVRFGINFVDYDNGMKRYPKNSARWFKKFLRK</sequence>
<accession>Q7F9K4</accession>
<accession>Q0JCF6</accession>
<protein>
    <recommendedName>
        <fullName>Beta-glucosidase 10</fullName>
        <shortName>Os4bglu10</shortName>
        <ecNumber evidence="2">3.2.1.21</ecNumber>
    </recommendedName>
</protein>
<keyword id="KW-1015">Disulfide bond</keyword>
<keyword id="KW-0325">Glycoprotein</keyword>
<keyword id="KW-0326">Glycosidase</keyword>
<keyword id="KW-0378">Hydrolase</keyword>
<keyword id="KW-1185">Reference proteome</keyword>
<keyword id="KW-0732">Signal</keyword>
<proteinExistence type="evidence at transcript level"/>
<reference key="1">
    <citation type="journal article" date="2002" name="Nature">
        <title>Sequence and analysis of rice chromosome 4.</title>
        <authorList>
            <person name="Feng Q."/>
            <person name="Zhang Y."/>
            <person name="Hao P."/>
            <person name="Wang S."/>
            <person name="Fu G."/>
            <person name="Huang Y."/>
            <person name="Li Y."/>
            <person name="Zhu J."/>
            <person name="Liu Y."/>
            <person name="Hu X."/>
            <person name="Jia P."/>
            <person name="Zhang Y."/>
            <person name="Zhao Q."/>
            <person name="Ying K."/>
            <person name="Yu S."/>
            <person name="Tang Y."/>
            <person name="Weng Q."/>
            <person name="Zhang L."/>
            <person name="Lu Y."/>
            <person name="Mu J."/>
            <person name="Lu Y."/>
            <person name="Zhang L.S."/>
            <person name="Yu Z."/>
            <person name="Fan D."/>
            <person name="Liu X."/>
            <person name="Lu T."/>
            <person name="Li C."/>
            <person name="Wu Y."/>
            <person name="Sun T."/>
            <person name="Lei H."/>
            <person name="Li T."/>
            <person name="Hu H."/>
            <person name="Guan J."/>
            <person name="Wu M."/>
            <person name="Zhang R."/>
            <person name="Zhou B."/>
            <person name="Chen Z."/>
            <person name="Chen L."/>
            <person name="Jin Z."/>
            <person name="Wang R."/>
            <person name="Yin H."/>
            <person name="Cai Z."/>
            <person name="Ren S."/>
            <person name="Lv G."/>
            <person name="Gu W."/>
            <person name="Zhu G."/>
            <person name="Tu Y."/>
            <person name="Jia J."/>
            <person name="Zhang Y."/>
            <person name="Chen J."/>
            <person name="Kang H."/>
            <person name="Chen X."/>
            <person name="Shao C."/>
            <person name="Sun Y."/>
            <person name="Hu Q."/>
            <person name="Zhang X."/>
            <person name="Zhang W."/>
            <person name="Wang L."/>
            <person name="Ding C."/>
            <person name="Sheng H."/>
            <person name="Gu J."/>
            <person name="Chen S."/>
            <person name="Ni L."/>
            <person name="Zhu F."/>
            <person name="Chen W."/>
            <person name="Lan L."/>
            <person name="Lai Y."/>
            <person name="Cheng Z."/>
            <person name="Gu M."/>
            <person name="Jiang J."/>
            <person name="Li J."/>
            <person name="Hong G."/>
            <person name="Xue Y."/>
            <person name="Han B."/>
        </authorList>
    </citation>
    <scope>NUCLEOTIDE SEQUENCE [LARGE SCALE GENOMIC DNA]</scope>
    <source>
        <strain>cv. Nipponbare</strain>
    </source>
</reference>
<reference key="2">
    <citation type="journal article" date="2005" name="Nature">
        <title>The map-based sequence of the rice genome.</title>
        <authorList>
            <consortium name="International rice genome sequencing project (IRGSP)"/>
        </authorList>
    </citation>
    <scope>NUCLEOTIDE SEQUENCE [LARGE SCALE GENOMIC DNA]</scope>
    <source>
        <strain>cv. Nipponbare</strain>
    </source>
</reference>
<reference key="3">
    <citation type="journal article" date="2008" name="Nucleic Acids Res.">
        <title>The rice annotation project database (RAP-DB): 2008 update.</title>
        <authorList>
            <consortium name="The rice annotation project (RAP)"/>
        </authorList>
    </citation>
    <scope>GENOME REANNOTATION</scope>
    <source>
        <strain>cv. Nipponbare</strain>
    </source>
</reference>
<reference key="4">
    <citation type="journal article" date="2013" name="Rice">
        <title>Improvement of the Oryza sativa Nipponbare reference genome using next generation sequence and optical map data.</title>
        <authorList>
            <person name="Kawahara Y."/>
            <person name="de la Bastide M."/>
            <person name="Hamilton J.P."/>
            <person name="Kanamori H."/>
            <person name="McCombie W.R."/>
            <person name="Ouyang S."/>
            <person name="Schwartz D.C."/>
            <person name="Tanaka T."/>
            <person name="Wu J."/>
            <person name="Zhou S."/>
            <person name="Childs K.L."/>
            <person name="Davidson R.M."/>
            <person name="Lin H."/>
            <person name="Quesada-Ocampo L."/>
            <person name="Vaillancourt B."/>
            <person name="Sakai H."/>
            <person name="Lee S.S."/>
            <person name="Kim J."/>
            <person name="Numa H."/>
            <person name="Itoh T."/>
            <person name="Buell C.R."/>
            <person name="Matsumoto T."/>
        </authorList>
    </citation>
    <scope>GENOME REANNOTATION</scope>
    <source>
        <strain>cv. Nipponbare</strain>
    </source>
</reference>
<reference key="5">
    <citation type="journal article" date="2005" name="PLoS Biol.">
        <title>The genomes of Oryza sativa: a history of duplications.</title>
        <authorList>
            <person name="Yu J."/>
            <person name="Wang J."/>
            <person name="Lin W."/>
            <person name="Li S."/>
            <person name="Li H."/>
            <person name="Zhou J."/>
            <person name="Ni P."/>
            <person name="Dong W."/>
            <person name="Hu S."/>
            <person name="Zeng C."/>
            <person name="Zhang J."/>
            <person name="Zhang Y."/>
            <person name="Li R."/>
            <person name="Xu Z."/>
            <person name="Li S."/>
            <person name="Li X."/>
            <person name="Zheng H."/>
            <person name="Cong L."/>
            <person name="Lin L."/>
            <person name="Yin J."/>
            <person name="Geng J."/>
            <person name="Li G."/>
            <person name="Shi J."/>
            <person name="Liu J."/>
            <person name="Lv H."/>
            <person name="Li J."/>
            <person name="Wang J."/>
            <person name="Deng Y."/>
            <person name="Ran L."/>
            <person name="Shi X."/>
            <person name="Wang X."/>
            <person name="Wu Q."/>
            <person name="Li C."/>
            <person name="Ren X."/>
            <person name="Wang J."/>
            <person name="Wang X."/>
            <person name="Li D."/>
            <person name="Liu D."/>
            <person name="Zhang X."/>
            <person name="Ji Z."/>
            <person name="Zhao W."/>
            <person name="Sun Y."/>
            <person name="Zhang Z."/>
            <person name="Bao J."/>
            <person name="Han Y."/>
            <person name="Dong L."/>
            <person name="Ji J."/>
            <person name="Chen P."/>
            <person name="Wu S."/>
            <person name="Liu J."/>
            <person name="Xiao Y."/>
            <person name="Bu D."/>
            <person name="Tan J."/>
            <person name="Yang L."/>
            <person name="Ye C."/>
            <person name="Zhang J."/>
            <person name="Xu J."/>
            <person name="Zhou Y."/>
            <person name="Yu Y."/>
            <person name="Zhang B."/>
            <person name="Zhuang S."/>
            <person name="Wei H."/>
            <person name="Liu B."/>
            <person name="Lei M."/>
            <person name="Yu H."/>
            <person name="Li Y."/>
            <person name="Xu H."/>
            <person name="Wei S."/>
            <person name="He X."/>
            <person name="Fang L."/>
            <person name="Zhang Z."/>
            <person name="Zhang Y."/>
            <person name="Huang X."/>
            <person name="Su Z."/>
            <person name="Tong W."/>
            <person name="Li J."/>
            <person name="Tong Z."/>
            <person name="Li S."/>
            <person name="Ye J."/>
            <person name="Wang L."/>
            <person name="Fang L."/>
            <person name="Lei T."/>
            <person name="Chen C.-S."/>
            <person name="Chen H.-C."/>
            <person name="Xu Z."/>
            <person name="Li H."/>
            <person name="Huang H."/>
            <person name="Zhang F."/>
            <person name="Xu H."/>
            <person name="Li N."/>
            <person name="Zhao C."/>
            <person name="Li S."/>
            <person name="Dong L."/>
            <person name="Huang Y."/>
            <person name="Li L."/>
            <person name="Xi Y."/>
            <person name="Qi Q."/>
            <person name="Li W."/>
            <person name="Zhang B."/>
            <person name="Hu W."/>
            <person name="Zhang Y."/>
            <person name="Tian X."/>
            <person name="Jiao Y."/>
            <person name="Liang X."/>
            <person name="Jin J."/>
            <person name="Gao L."/>
            <person name="Zheng W."/>
            <person name="Hao B."/>
            <person name="Liu S.-M."/>
            <person name="Wang W."/>
            <person name="Yuan L."/>
            <person name="Cao M."/>
            <person name="McDermott J."/>
            <person name="Samudrala R."/>
            <person name="Wang J."/>
            <person name="Wong G.K.-S."/>
            <person name="Yang H."/>
        </authorList>
    </citation>
    <scope>NUCLEOTIDE SEQUENCE [LARGE SCALE GENOMIC DNA]</scope>
    <source>
        <strain>cv. Nipponbare</strain>
    </source>
</reference>
<reference key="6">
    <citation type="journal article" date="2003" name="Science">
        <title>Collection, mapping, and annotation of over 28,000 cDNA clones from japonica rice.</title>
        <authorList>
            <consortium name="The rice full-length cDNA consortium"/>
        </authorList>
    </citation>
    <scope>NUCLEOTIDE SEQUENCE [LARGE SCALE MRNA]</scope>
    <source>
        <strain>cv. Nipponbare</strain>
    </source>
</reference>
<reference key="7">
    <citation type="journal article" date="2006" name="BMC Plant Biol.">
        <title>Analysis of rice glycosyl hydrolase family 1 and expression of Os4bglu12 beta-glucosidase.</title>
        <authorList>
            <person name="Opassiri R."/>
            <person name="Pomthong B."/>
            <person name="Onkoksoong T."/>
            <person name="Akiyama T."/>
            <person name="Esen A."/>
            <person name="Ketudat Cairns J.R."/>
        </authorList>
    </citation>
    <scope>GENE FAMILY</scope>
    <scope>NOMENCLATURE</scope>
</reference>
<comment type="catalytic activity">
    <reaction evidence="2">
        <text>Hydrolysis of terminal, non-reducing beta-D-glucosyl residues with release of beta-D-glucose.</text>
        <dbReference type="EC" id="3.2.1.21"/>
    </reaction>
</comment>
<comment type="similarity">
    <text evidence="7">Belongs to the glycosyl hydrolase 1 family.</text>
</comment>
<comment type="sequence caution" evidence="7">
    <conflict type="erroneous gene model prediction">
        <sequence resource="EMBL-CDS" id="BAF14981"/>
    </conflict>
</comment>